<sequence length="101" mass="11299">MGIRYLLVLVLVLLVLGCEVQGAHMPQQDEATSSSLFTQMQESFYGYWGIAKSAVQGLYEKTYLTTMDEKIREIYNKSTAAVSTYAGIFTDQLLSMLKGDQ</sequence>
<protein>
    <recommendedName>
        <fullName>Apolipoprotein C-II</fullName>
        <shortName>Apo-CII</shortName>
        <shortName>ApoC-II</shortName>
    </recommendedName>
    <alternativeName>
        <fullName>Apolipoprotein C2</fullName>
    </alternativeName>
    <component>
        <recommendedName>
            <fullName>Proapolipoprotein C-II</fullName>
            <shortName>ProapoC-II</shortName>
        </recommendedName>
    </component>
</protein>
<organism>
    <name type="scientific">Neomonachus schauinslandi</name>
    <name type="common">Hawaiian monk seal</name>
    <name type="synonym">Monachus schauinslandi</name>
    <dbReference type="NCBI Taxonomy" id="29088"/>
    <lineage>
        <taxon>Eukaryota</taxon>
        <taxon>Metazoa</taxon>
        <taxon>Chordata</taxon>
        <taxon>Craniata</taxon>
        <taxon>Vertebrata</taxon>
        <taxon>Euteleostomi</taxon>
        <taxon>Mammalia</taxon>
        <taxon>Eutheria</taxon>
        <taxon>Laurasiatheria</taxon>
        <taxon>Carnivora</taxon>
        <taxon>Caniformia</taxon>
        <taxon>Pinnipedia</taxon>
        <taxon>Phocidae</taxon>
        <taxon>Monachinae</taxon>
        <taxon>Monachini</taxon>
        <taxon>Neomonachus</taxon>
    </lineage>
</organism>
<gene>
    <name type="primary">APOC2</name>
</gene>
<comment type="function">
    <text evidence="1">Component of chylomicrons, very low-density lipoproteins (VLDL), low-density lipoproteins (LDL), and high-density lipoproteins (HDL) in plasma. Plays an important role in lipoprotein metabolism as an activator of lipoprotein lipase. Both proapolipoprotein C-II and apolipoprotein C-II can activate lipoprotein lipase.</text>
</comment>
<comment type="subcellular location">
    <subcellularLocation>
        <location evidence="1">Secreted</location>
    </subcellularLocation>
</comment>
<comment type="PTM">
    <text evidence="1">Proapolipoprotein C-II is synthesized as a sialic acid containing glycoprotein which is subsequently desialylated prior to its proteolytic processing.</text>
</comment>
<comment type="PTM">
    <text evidence="1">Proapolipoprotein C-II, the major form found in plasma undergoes proteolytic cleavage of its N-terminal hexapeptide to generate apolipoprotein C-II, which occurs as the minor form in plasma.</text>
</comment>
<comment type="similarity">
    <text evidence="3">Belongs to the apolipoprotein C2 family.</text>
</comment>
<dbReference type="EMBL" id="NINY01000000">
    <property type="status" value="NOT_ANNOTATED_CDS"/>
    <property type="molecule type" value="Genomic_DNA"/>
</dbReference>
<dbReference type="RefSeq" id="XP_021537004.1">
    <property type="nucleotide sequence ID" value="XM_021681329.1"/>
</dbReference>
<dbReference type="SMR" id="A0A2Y9GHM8"/>
<dbReference type="GeneID" id="110572910"/>
<dbReference type="InParanoid" id="A0A2Y9GHM8"/>
<dbReference type="Proteomes" id="UP000248481">
    <property type="component" value="Chromosome 16"/>
</dbReference>
<dbReference type="GO" id="GO:0042627">
    <property type="term" value="C:chylomicron"/>
    <property type="evidence" value="ECO:0007669"/>
    <property type="project" value="UniProtKB-KW"/>
</dbReference>
<dbReference type="GO" id="GO:0034364">
    <property type="term" value="C:high-density lipoprotein particle"/>
    <property type="evidence" value="ECO:0007669"/>
    <property type="project" value="UniProtKB-KW"/>
</dbReference>
<dbReference type="GO" id="GO:0034362">
    <property type="term" value="C:low-density lipoprotein particle"/>
    <property type="evidence" value="ECO:0007669"/>
    <property type="project" value="UniProtKB-KW"/>
</dbReference>
<dbReference type="GO" id="GO:0034361">
    <property type="term" value="C:very-low-density lipoprotein particle"/>
    <property type="evidence" value="ECO:0007669"/>
    <property type="project" value="UniProtKB-KW"/>
</dbReference>
<dbReference type="GO" id="GO:0016004">
    <property type="term" value="F:phospholipase activator activity"/>
    <property type="evidence" value="ECO:0007669"/>
    <property type="project" value="TreeGrafter"/>
</dbReference>
<dbReference type="GO" id="GO:0043274">
    <property type="term" value="F:phospholipase binding"/>
    <property type="evidence" value="ECO:0007669"/>
    <property type="project" value="TreeGrafter"/>
</dbReference>
<dbReference type="GO" id="GO:0016042">
    <property type="term" value="P:lipid catabolic process"/>
    <property type="evidence" value="ECO:0007669"/>
    <property type="project" value="UniProtKB-KW"/>
</dbReference>
<dbReference type="GO" id="GO:0006869">
    <property type="term" value="P:lipid transport"/>
    <property type="evidence" value="ECO:0007669"/>
    <property type="project" value="UniProtKB-KW"/>
</dbReference>
<dbReference type="GO" id="GO:0060697">
    <property type="term" value="P:positive regulation of phospholipid catabolic process"/>
    <property type="evidence" value="ECO:0007669"/>
    <property type="project" value="TreeGrafter"/>
</dbReference>
<dbReference type="Gene3D" id="1.10.1440.10">
    <property type="entry name" value="Apolipoprotein C-II"/>
    <property type="match status" value="1"/>
</dbReference>
<dbReference type="InterPro" id="IPR008019">
    <property type="entry name" value="Apo-CII"/>
</dbReference>
<dbReference type="InterPro" id="IPR023121">
    <property type="entry name" value="ApoC-II_dom_sf"/>
</dbReference>
<dbReference type="PANTHER" id="PTHR16566">
    <property type="entry name" value="APOLIPOPROTEIN C-II"/>
    <property type="match status" value="1"/>
</dbReference>
<dbReference type="PANTHER" id="PTHR16566:SF0">
    <property type="entry name" value="APOLIPOPROTEIN C-II"/>
    <property type="match status" value="1"/>
</dbReference>
<dbReference type="Pfam" id="PF05355">
    <property type="entry name" value="Apo-CII"/>
    <property type="match status" value="1"/>
</dbReference>
<name>APOC2_NEOSC</name>
<reference key="1">
    <citation type="submission" date="2017-05" db="EMBL/GenBank/DDBJ databases">
        <title>Improved de novo genome assembly: linked-read sequencing combined with optical mapping produce a high quality mammalian genome at relatively low cost.</title>
        <authorList>
            <person name="Mohr D.W."/>
            <person name="Scott A.F."/>
        </authorList>
    </citation>
    <scope>NUCLEOTIDE SEQUENCE [LARGE SCALE GENOMIC DNA]</scope>
</reference>
<reference key="2">
    <citation type="unpublished observations" date="2019-08">
        <authorList>
            <person name="Puppione D.L."/>
        </authorList>
    </citation>
    <scope>IDENTIFICATION</scope>
</reference>
<accession>A0A2Y9GHM8</accession>
<feature type="signal peptide" evidence="2">
    <location>
        <begin position="1"/>
        <end position="22"/>
    </location>
</feature>
<feature type="chain" id="PRO_5015922265" description="Proapolipoprotein C-II">
    <location>
        <begin position="23"/>
        <end position="101"/>
    </location>
</feature>
<feature type="propeptide" id="PRO_0000448371" evidence="1">
    <location>
        <begin position="23"/>
        <end position="28"/>
    </location>
</feature>
<feature type="chain" id="PRO_0000448372" description="Apolipoprotein C-II" evidence="1">
    <location>
        <begin position="29"/>
        <end position="101"/>
    </location>
</feature>
<feature type="region of interest" description="Lipid binding" evidence="1">
    <location>
        <begin position="66"/>
        <end position="74"/>
    </location>
</feature>
<feature type="region of interest" description="Lipoprotein lipase cofactor" evidence="1">
    <location>
        <begin position="78"/>
        <end position="101"/>
    </location>
</feature>
<evidence type="ECO:0000250" key="1">
    <source>
        <dbReference type="UniProtKB" id="P02655"/>
    </source>
</evidence>
<evidence type="ECO:0000255" key="2"/>
<evidence type="ECO:0000305" key="3"/>
<keyword id="KW-0162">Chylomicron</keyword>
<keyword id="KW-0325">Glycoprotein</keyword>
<keyword id="KW-0345">HDL</keyword>
<keyword id="KW-0427">LDL</keyword>
<keyword id="KW-0442">Lipid degradation</keyword>
<keyword id="KW-0443">Lipid metabolism</keyword>
<keyword id="KW-0445">Lipid transport</keyword>
<keyword id="KW-1185">Reference proteome</keyword>
<keyword id="KW-0964">Secreted</keyword>
<keyword id="KW-0730">Sialic acid</keyword>
<keyword id="KW-0732">Signal</keyword>
<keyword id="KW-0813">Transport</keyword>
<keyword id="KW-0850">VLDL</keyword>
<proteinExistence type="inferred from homology"/>